<proteinExistence type="evidence at protein level"/>
<name>PVK3_SYMPA</name>
<feature type="peptide" id="PRO_0000378856" description="Periviscerokinin-3" evidence="2">
    <location>
        <begin position="1"/>
        <end position="11"/>
    </location>
</feature>
<feature type="modified residue" description="Valine amide" evidence="2">
    <location>
        <position position="11"/>
    </location>
</feature>
<keyword id="KW-0027">Amidation</keyword>
<keyword id="KW-0903">Direct protein sequencing</keyword>
<keyword id="KW-0527">Neuropeptide</keyword>
<keyword id="KW-0964">Secreted</keyword>
<protein>
    <recommendedName>
        <fullName evidence="3">Periviscerokinin-3</fullName>
        <shortName evidence="3">SymPa-PVK-3</shortName>
    </recommendedName>
</protein>
<organism>
    <name type="scientific">Symploce pallens</name>
    <name type="common">Smooth cockroach</name>
    <name type="synonym">Symploce capitata</name>
    <dbReference type="NCBI Taxonomy" id="36974"/>
    <lineage>
        <taxon>Eukaryota</taxon>
        <taxon>Metazoa</taxon>
        <taxon>Ecdysozoa</taxon>
        <taxon>Arthropoda</taxon>
        <taxon>Hexapoda</taxon>
        <taxon>Insecta</taxon>
        <taxon>Pterygota</taxon>
        <taxon>Neoptera</taxon>
        <taxon>Polyneoptera</taxon>
        <taxon>Dictyoptera</taxon>
        <taxon>Blattodea</taxon>
        <taxon>Blaberoidea</taxon>
        <taxon>Blattellidae</taxon>
        <taxon>Symploce</taxon>
    </lineage>
</organism>
<evidence type="ECO:0000255" key="1"/>
<evidence type="ECO:0000269" key="2">
    <source>
    </source>
</evidence>
<evidence type="ECO:0000303" key="3">
    <source>
    </source>
</evidence>
<evidence type="ECO:0000305" key="4"/>
<reference evidence="4" key="1">
    <citation type="journal article" date="2009" name="BMC Evol. Biol.">
        <title>A proteomic approach for studying insect phylogeny: CAPA peptides of ancient insect taxa (Dictyoptera, Blattoptera) as a test case.</title>
        <authorList>
            <person name="Roth S."/>
            <person name="Fromm B."/>
            <person name="Gaede G."/>
            <person name="Predel R."/>
        </authorList>
    </citation>
    <scope>PROTEIN SEQUENCE</scope>
    <scope>AMIDATION AT VAL-11</scope>
    <source>
        <tissue evidence="2">Abdominal perisympathetic organs</tissue>
    </source>
</reference>
<sequence>GSSGMIPFPRV</sequence>
<comment type="function">
    <text evidence="4">Mediates visceral muscle contractile activity (myotropic activity).</text>
</comment>
<comment type="subcellular location">
    <subcellularLocation>
        <location evidence="4">Secreted</location>
    </subcellularLocation>
</comment>
<comment type="similarity">
    <text evidence="1">Belongs to the periviscerokinin family.</text>
</comment>
<accession>P85783</accession>
<dbReference type="GO" id="GO:0005576">
    <property type="term" value="C:extracellular region"/>
    <property type="evidence" value="ECO:0007669"/>
    <property type="project" value="UniProtKB-SubCell"/>
</dbReference>
<dbReference type="GO" id="GO:0007218">
    <property type="term" value="P:neuropeptide signaling pathway"/>
    <property type="evidence" value="ECO:0007669"/>
    <property type="project" value="UniProtKB-KW"/>
</dbReference>
<dbReference type="InterPro" id="IPR013231">
    <property type="entry name" value="Periviscerokinin"/>
</dbReference>
<dbReference type="Pfam" id="PF08259">
    <property type="entry name" value="Periviscerokin"/>
    <property type="match status" value="1"/>
</dbReference>